<feature type="chain" id="PRO_0000298074" description="Cell division topological specificity factor">
    <location>
        <begin position="1"/>
        <end position="100"/>
    </location>
</feature>
<evidence type="ECO:0000255" key="1">
    <source>
        <dbReference type="HAMAP-Rule" id="MF_00262"/>
    </source>
</evidence>
<organism>
    <name type="scientific">Blochmanniella floridana</name>
    <dbReference type="NCBI Taxonomy" id="203907"/>
    <lineage>
        <taxon>Bacteria</taxon>
        <taxon>Pseudomonadati</taxon>
        <taxon>Pseudomonadota</taxon>
        <taxon>Gammaproteobacteria</taxon>
        <taxon>Enterobacterales</taxon>
        <taxon>Enterobacteriaceae</taxon>
        <taxon>ant endosymbionts</taxon>
        <taxon>Candidatus Blochmanniella</taxon>
    </lineage>
</organism>
<keyword id="KW-0131">Cell cycle</keyword>
<keyword id="KW-0132">Cell division</keyword>
<keyword id="KW-1185">Reference proteome</keyword>
<comment type="function">
    <text evidence="1">Prevents the cell division inhibition by proteins MinC and MinD at internal division sites while permitting inhibition at polar sites. This ensures cell division at the proper site by restricting the formation of a division septum at the midpoint of the long axis of the cell.</text>
</comment>
<comment type="similarity">
    <text evidence="1">Belongs to the MinE family.</text>
</comment>
<protein>
    <recommendedName>
        <fullName evidence="1">Cell division topological specificity factor</fullName>
    </recommendedName>
</protein>
<name>MINE_BLOFL</name>
<accession>Q7VQY9</accession>
<dbReference type="EMBL" id="BX248583">
    <property type="protein sequence ID" value="CAD83503.1"/>
    <property type="molecule type" value="Genomic_DNA"/>
</dbReference>
<dbReference type="SMR" id="Q7VQY9"/>
<dbReference type="STRING" id="203907.Bfl441"/>
<dbReference type="KEGG" id="bfl:Bfl441"/>
<dbReference type="eggNOG" id="COG0851">
    <property type="taxonomic scope" value="Bacteria"/>
</dbReference>
<dbReference type="HOGENOM" id="CLU_137929_2_2_6"/>
<dbReference type="OrthoDB" id="9802655at2"/>
<dbReference type="Proteomes" id="UP000002192">
    <property type="component" value="Chromosome"/>
</dbReference>
<dbReference type="GO" id="GO:0051301">
    <property type="term" value="P:cell division"/>
    <property type="evidence" value="ECO:0007669"/>
    <property type="project" value="UniProtKB-KW"/>
</dbReference>
<dbReference type="GO" id="GO:0032955">
    <property type="term" value="P:regulation of division septum assembly"/>
    <property type="evidence" value="ECO:0007669"/>
    <property type="project" value="InterPro"/>
</dbReference>
<dbReference type="Gene3D" id="3.30.1070.10">
    <property type="entry name" value="Cell division topological specificity factor MinE"/>
    <property type="match status" value="1"/>
</dbReference>
<dbReference type="HAMAP" id="MF_00262">
    <property type="entry name" value="MinE"/>
    <property type="match status" value="1"/>
</dbReference>
<dbReference type="InterPro" id="IPR005527">
    <property type="entry name" value="MinE"/>
</dbReference>
<dbReference type="InterPro" id="IPR036707">
    <property type="entry name" value="MinE_sf"/>
</dbReference>
<dbReference type="NCBIfam" id="TIGR01215">
    <property type="entry name" value="minE"/>
    <property type="match status" value="1"/>
</dbReference>
<dbReference type="NCBIfam" id="NF001422">
    <property type="entry name" value="PRK00296.1"/>
    <property type="match status" value="1"/>
</dbReference>
<dbReference type="Pfam" id="PF03776">
    <property type="entry name" value="MinE"/>
    <property type="match status" value="1"/>
</dbReference>
<dbReference type="SUPFAM" id="SSF55229">
    <property type="entry name" value="Cell division protein MinE topological specificity domain"/>
    <property type="match status" value="1"/>
</dbReference>
<reference key="1">
    <citation type="journal article" date="2003" name="Proc. Natl. Acad. Sci. U.S.A.">
        <title>The genome sequence of Blochmannia floridanus: comparative analysis of reduced genomes.</title>
        <authorList>
            <person name="Gil R."/>
            <person name="Silva F.J."/>
            <person name="Zientz E."/>
            <person name="Delmotte F."/>
            <person name="Gonzalez-Candelas F."/>
            <person name="Latorre A."/>
            <person name="Rausell C."/>
            <person name="Kamerbeek J."/>
            <person name="Gadau J."/>
            <person name="Hoelldobler B."/>
            <person name="van Ham R.C.H.J."/>
            <person name="Gross R."/>
            <person name="Moya A."/>
        </authorList>
    </citation>
    <scope>NUCLEOTIDE SEQUENCE [LARGE SCALE GENOMIC DNA]</scope>
</reference>
<sequence length="100" mass="11814">MVLTNFFLRKKTSTTASIAKKRLHIIVTERKIDNTPELNYLPKFKKDLLRIIHQYIHEPKKISIQLQEQDNNAYMLQLTISFLTKNQDLINSKKQDNTTV</sequence>
<gene>
    <name evidence="1" type="primary">minE</name>
    <name type="ordered locus">Bfl441</name>
</gene>
<proteinExistence type="inferred from homology"/>